<dbReference type="EC" id="3.5.4.16" evidence="1"/>
<dbReference type="EMBL" id="CP000903">
    <property type="protein sequence ID" value="ABY42682.1"/>
    <property type="molecule type" value="Genomic_DNA"/>
</dbReference>
<dbReference type="RefSeq" id="WP_002011819.1">
    <property type="nucleotide sequence ID" value="NC_010184.1"/>
</dbReference>
<dbReference type="SMR" id="A9VMC0"/>
<dbReference type="GeneID" id="66263437"/>
<dbReference type="KEGG" id="bwe:BcerKBAB4_1435"/>
<dbReference type="eggNOG" id="COG0302">
    <property type="taxonomic scope" value="Bacteria"/>
</dbReference>
<dbReference type="HOGENOM" id="CLU_049768_3_3_9"/>
<dbReference type="UniPathway" id="UPA00848">
    <property type="reaction ID" value="UER00151"/>
</dbReference>
<dbReference type="Proteomes" id="UP000002154">
    <property type="component" value="Chromosome"/>
</dbReference>
<dbReference type="GO" id="GO:0005737">
    <property type="term" value="C:cytoplasm"/>
    <property type="evidence" value="ECO:0007669"/>
    <property type="project" value="TreeGrafter"/>
</dbReference>
<dbReference type="GO" id="GO:0005525">
    <property type="term" value="F:GTP binding"/>
    <property type="evidence" value="ECO:0007669"/>
    <property type="project" value="UniProtKB-KW"/>
</dbReference>
<dbReference type="GO" id="GO:0003934">
    <property type="term" value="F:GTP cyclohydrolase I activity"/>
    <property type="evidence" value="ECO:0007669"/>
    <property type="project" value="UniProtKB-UniRule"/>
</dbReference>
<dbReference type="GO" id="GO:0008270">
    <property type="term" value="F:zinc ion binding"/>
    <property type="evidence" value="ECO:0007669"/>
    <property type="project" value="UniProtKB-UniRule"/>
</dbReference>
<dbReference type="GO" id="GO:0006730">
    <property type="term" value="P:one-carbon metabolic process"/>
    <property type="evidence" value="ECO:0007669"/>
    <property type="project" value="UniProtKB-UniRule"/>
</dbReference>
<dbReference type="GO" id="GO:0006729">
    <property type="term" value="P:tetrahydrobiopterin biosynthetic process"/>
    <property type="evidence" value="ECO:0007669"/>
    <property type="project" value="TreeGrafter"/>
</dbReference>
<dbReference type="GO" id="GO:0046654">
    <property type="term" value="P:tetrahydrofolate biosynthetic process"/>
    <property type="evidence" value="ECO:0007669"/>
    <property type="project" value="UniProtKB-UniRule"/>
</dbReference>
<dbReference type="CDD" id="cd00642">
    <property type="entry name" value="GTP_cyclohydro1"/>
    <property type="match status" value="1"/>
</dbReference>
<dbReference type="FunFam" id="1.10.286.10:FF:000001">
    <property type="entry name" value="GTP cyclohydrolase 1"/>
    <property type="match status" value="1"/>
</dbReference>
<dbReference type="FunFam" id="3.30.1130.10:FF:000001">
    <property type="entry name" value="GTP cyclohydrolase 1"/>
    <property type="match status" value="1"/>
</dbReference>
<dbReference type="Gene3D" id="1.10.286.10">
    <property type="match status" value="1"/>
</dbReference>
<dbReference type="Gene3D" id="3.30.1130.10">
    <property type="match status" value="1"/>
</dbReference>
<dbReference type="HAMAP" id="MF_00223">
    <property type="entry name" value="FolE"/>
    <property type="match status" value="1"/>
</dbReference>
<dbReference type="InterPro" id="IPR043133">
    <property type="entry name" value="GTP-CH-I_C/QueF"/>
</dbReference>
<dbReference type="InterPro" id="IPR043134">
    <property type="entry name" value="GTP-CH-I_N"/>
</dbReference>
<dbReference type="InterPro" id="IPR001474">
    <property type="entry name" value="GTP_CycHdrlase_I"/>
</dbReference>
<dbReference type="InterPro" id="IPR018234">
    <property type="entry name" value="GTP_CycHdrlase_I_CS"/>
</dbReference>
<dbReference type="InterPro" id="IPR020602">
    <property type="entry name" value="GTP_CycHdrlase_I_dom"/>
</dbReference>
<dbReference type="NCBIfam" id="TIGR00063">
    <property type="entry name" value="folE"/>
    <property type="match status" value="1"/>
</dbReference>
<dbReference type="NCBIfam" id="NF006825">
    <property type="entry name" value="PRK09347.1-2"/>
    <property type="match status" value="1"/>
</dbReference>
<dbReference type="NCBIfam" id="NF006826">
    <property type="entry name" value="PRK09347.1-3"/>
    <property type="match status" value="1"/>
</dbReference>
<dbReference type="PANTHER" id="PTHR11109:SF7">
    <property type="entry name" value="GTP CYCLOHYDROLASE 1"/>
    <property type="match status" value="1"/>
</dbReference>
<dbReference type="PANTHER" id="PTHR11109">
    <property type="entry name" value="GTP CYCLOHYDROLASE I"/>
    <property type="match status" value="1"/>
</dbReference>
<dbReference type="Pfam" id="PF01227">
    <property type="entry name" value="GTP_cyclohydroI"/>
    <property type="match status" value="1"/>
</dbReference>
<dbReference type="SUPFAM" id="SSF55620">
    <property type="entry name" value="Tetrahydrobiopterin biosynthesis enzymes-like"/>
    <property type="match status" value="1"/>
</dbReference>
<dbReference type="PROSITE" id="PS00859">
    <property type="entry name" value="GTP_CYCLOHYDROL_1_1"/>
    <property type="match status" value="1"/>
</dbReference>
<dbReference type="PROSITE" id="PS00860">
    <property type="entry name" value="GTP_CYCLOHYDROL_1_2"/>
    <property type="match status" value="1"/>
</dbReference>
<accession>A9VMC0</accession>
<comment type="catalytic activity">
    <reaction evidence="1">
        <text>GTP + H2O = 7,8-dihydroneopterin 3'-triphosphate + formate + H(+)</text>
        <dbReference type="Rhea" id="RHEA:17473"/>
        <dbReference type="ChEBI" id="CHEBI:15377"/>
        <dbReference type="ChEBI" id="CHEBI:15378"/>
        <dbReference type="ChEBI" id="CHEBI:15740"/>
        <dbReference type="ChEBI" id="CHEBI:37565"/>
        <dbReference type="ChEBI" id="CHEBI:58462"/>
        <dbReference type="EC" id="3.5.4.16"/>
    </reaction>
</comment>
<comment type="pathway">
    <text evidence="1">Cofactor biosynthesis; 7,8-dihydroneopterin triphosphate biosynthesis; 7,8-dihydroneopterin triphosphate from GTP: step 1/1.</text>
</comment>
<comment type="subunit">
    <text evidence="1">Homomer.</text>
</comment>
<comment type="similarity">
    <text evidence="1">Belongs to the GTP cyclohydrolase I family.</text>
</comment>
<name>GCH1_BACMK</name>
<keyword id="KW-0342">GTP-binding</keyword>
<keyword id="KW-0378">Hydrolase</keyword>
<keyword id="KW-0479">Metal-binding</keyword>
<keyword id="KW-0547">Nucleotide-binding</keyword>
<keyword id="KW-0554">One-carbon metabolism</keyword>
<keyword id="KW-0862">Zinc</keyword>
<proteinExistence type="inferred from homology"/>
<sequence length="189" mass="21006">MAKVNLEQIEHAVRLILEAIGDDPNREGVLDTPKRVAKMYAEVFSGMHEDPKEHLHKVFGEDHEELVLVKDIPFYSMCEHHLVPFYGVAHVAYIPQGGKVTGLSKLARTVDTIARRPQLQERITSTVANSIMEVLEPHGVMVVVEAEHMCMTMRGVKKPGAKTVTTAVRGVLENDAAARSEILSFIKTN</sequence>
<reference key="1">
    <citation type="journal article" date="2008" name="Chem. Biol. Interact.">
        <title>Extending the Bacillus cereus group genomics to putative food-borne pathogens of different toxicity.</title>
        <authorList>
            <person name="Lapidus A."/>
            <person name="Goltsman E."/>
            <person name="Auger S."/>
            <person name="Galleron N."/>
            <person name="Segurens B."/>
            <person name="Dossat C."/>
            <person name="Land M.L."/>
            <person name="Broussolle V."/>
            <person name="Brillard J."/>
            <person name="Guinebretiere M.-H."/>
            <person name="Sanchis V."/>
            <person name="Nguen-the C."/>
            <person name="Lereclus D."/>
            <person name="Richardson P."/>
            <person name="Wincker P."/>
            <person name="Weissenbach J."/>
            <person name="Ehrlich S.D."/>
            <person name="Sorokin A."/>
        </authorList>
    </citation>
    <scope>NUCLEOTIDE SEQUENCE [LARGE SCALE GENOMIC DNA]</scope>
    <source>
        <strain>KBAB4</strain>
    </source>
</reference>
<protein>
    <recommendedName>
        <fullName evidence="1">GTP cyclohydrolase 1</fullName>
        <ecNumber evidence="1">3.5.4.16</ecNumber>
    </recommendedName>
    <alternativeName>
        <fullName evidence="1">GTP cyclohydrolase I</fullName>
        <shortName evidence="1">GTP-CH-I</shortName>
    </alternativeName>
</protein>
<feature type="chain" id="PRO_1000100161" description="GTP cyclohydrolase 1">
    <location>
        <begin position="1"/>
        <end position="189"/>
    </location>
</feature>
<feature type="binding site" evidence="1">
    <location>
        <position position="78"/>
    </location>
    <ligand>
        <name>Zn(2+)</name>
        <dbReference type="ChEBI" id="CHEBI:29105"/>
    </ligand>
</feature>
<feature type="binding site" evidence="1">
    <location>
        <position position="81"/>
    </location>
    <ligand>
        <name>Zn(2+)</name>
        <dbReference type="ChEBI" id="CHEBI:29105"/>
    </ligand>
</feature>
<feature type="binding site" evidence="1">
    <location>
        <position position="150"/>
    </location>
    <ligand>
        <name>Zn(2+)</name>
        <dbReference type="ChEBI" id="CHEBI:29105"/>
    </ligand>
</feature>
<gene>
    <name evidence="1" type="primary">folE</name>
    <name type="ordered locus">BcerKBAB4_1435</name>
</gene>
<evidence type="ECO:0000255" key="1">
    <source>
        <dbReference type="HAMAP-Rule" id="MF_00223"/>
    </source>
</evidence>
<organism>
    <name type="scientific">Bacillus mycoides (strain KBAB4)</name>
    <name type="common">Bacillus weihenstephanensis</name>
    <dbReference type="NCBI Taxonomy" id="315730"/>
    <lineage>
        <taxon>Bacteria</taxon>
        <taxon>Bacillati</taxon>
        <taxon>Bacillota</taxon>
        <taxon>Bacilli</taxon>
        <taxon>Bacillales</taxon>
        <taxon>Bacillaceae</taxon>
        <taxon>Bacillus</taxon>
        <taxon>Bacillus cereus group</taxon>
    </lineage>
</organism>